<sequence>MSHEGSRQARDRGVTRSKAEKARPPTQPVPQVDIVPGRLNEAEWIAFMSLEEGEDIVGDILADLVTRVMECAFKVYLTQQCVPFTISQAREAMLQITEWRFLARDEGESAVAEDPTWGEDEEPLACTTDAWAQGSVPVLHAPAPVGVEEHFHNEEPGNPDQFLIDSSWLGRESQEPTQSSEPSAEPRVNPRPTPAMEVFEEAEPRDALEVPHRQESILTVPSKESLRPTLEVQTVHSPQLSPKLSQVVSLQTCERTGSSFGSHLSLQDLYHCVPQPDAAGDRLNLKNKGQLCRSSIGSADRSLLSVPTPDGPSPFLQPGGMERRPSHKTPTMRLDPSRLPRHWVRPVAEVLIPDLEARPLEIYRVRPRKSQVGASASESQALGSRTHSKLQVSIPRFPLKRCATFRSSGPDPTLNLAQSSPSFGSNLPFLSPGFRFLARNLVPPDVASAPSPKLWPRAKWPSGWEREAEQLGELWAGRTRVPPQGQEPVEDSVSEDSGWPLAVPQVLEATSQVLWKPMVISENMKLVPGVSMWNRGTQELLNPAAIQEEAEEGTPQAPEQQPIQTGVSKPQVIMKQLRNETPKAWLLPTKPVPHSGS</sequence>
<organism>
    <name type="scientific">Rattus norvegicus</name>
    <name type="common">Rat</name>
    <dbReference type="NCBI Taxonomy" id="10116"/>
    <lineage>
        <taxon>Eukaryota</taxon>
        <taxon>Metazoa</taxon>
        <taxon>Chordata</taxon>
        <taxon>Craniata</taxon>
        <taxon>Vertebrata</taxon>
        <taxon>Euteleostomi</taxon>
        <taxon>Mammalia</taxon>
        <taxon>Eutheria</taxon>
        <taxon>Euarchontoglires</taxon>
        <taxon>Glires</taxon>
        <taxon>Rodentia</taxon>
        <taxon>Myomorpha</taxon>
        <taxon>Muroidea</taxon>
        <taxon>Muridae</taxon>
        <taxon>Murinae</taxon>
        <taxon>Rattus</taxon>
    </lineage>
</organism>
<reference key="1">
    <citation type="journal article" date="2004" name="Genome Res.">
        <title>The status, quality, and expansion of the NIH full-length cDNA project: the Mammalian Gene Collection (MGC).</title>
        <authorList>
            <consortium name="The MGC Project Team"/>
        </authorList>
    </citation>
    <scope>NUCLEOTIDE SEQUENCE [LARGE SCALE MRNA]</scope>
    <source>
        <tissue>Testis</tissue>
    </source>
</reference>
<reference key="2">
    <citation type="journal article" date="2012" name="Nat. Commun.">
        <title>Quantitative maps of protein phosphorylation sites across 14 different rat organs and tissues.</title>
        <authorList>
            <person name="Lundby A."/>
            <person name="Secher A."/>
            <person name="Lage K."/>
            <person name="Nordsborg N.B."/>
            <person name="Dmytriyev A."/>
            <person name="Lundby C."/>
            <person name="Olsen J.V."/>
        </authorList>
    </citation>
    <scope>PHOSPHORYLATION [LARGE SCALE ANALYSIS] AT SER-237 AND SER-241</scope>
    <scope>IDENTIFICATION BY MASS SPECTROMETRY [LARGE SCALE ANALYSIS]</scope>
</reference>
<evidence type="ECO:0000256" key="1">
    <source>
        <dbReference type="SAM" id="MobiDB-lite"/>
    </source>
</evidence>
<evidence type="ECO:0007744" key="2">
    <source>
    </source>
</evidence>
<protein>
    <recommendedName>
        <fullName>Uncharacterized protein C2orf81 homolog</fullName>
    </recommendedName>
</protein>
<dbReference type="EMBL" id="BC079424">
    <property type="protein sequence ID" value="AAH79424.1"/>
    <property type="molecule type" value="mRNA"/>
</dbReference>
<dbReference type="RefSeq" id="NP_001019501.1">
    <property type="nucleotide sequence ID" value="NM_001024330.1"/>
</dbReference>
<dbReference type="FunCoup" id="Q6AXP4">
    <property type="interactions" value="127"/>
</dbReference>
<dbReference type="STRING" id="10116.ENSRNOP00000013311"/>
<dbReference type="GlyGen" id="Q6AXP4">
    <property type="glycosylation" value="2 sites"/>
</dbReference>
<dbReference type="iPTMnet" id="Q6AXP4"/>
<dbReference type="PhosphoSitePlus" id="Q6AXP4"/>
<dbReference type="PaxDb" id="10116-ENSRNOP00000013311"/>
<dbReference type="Ensembl" id="ENSRNOT00000013312.5">
    <property type="protein sequence ID" value="ENSRNOP00000013311.3"/>
    <property type="gene ID" value="ENSRNOG00000010048.7"/>
</dbReference>
<dbReference type="GeneID" id="500227"/>
<dbReference type="KEGG" id="rno:500227"/>
<dbReference type="UCSC" id="RGD:1566019">
    <property type="organism name" value="rat"/>
</dbReference>
<dbReference type="AGR" id="RGD:1566019"/>
<dbReference type="CTD" id="500227"/>
<dbReference type="RGD" id="1566019">
    <property type="gene designation" value="C4h2orf81"/>
</dbReference>
<dbReference type="eggNOG" id="KOG1208">
    <property type="taxonomic scope" value="Eukaryota"/>
</dbReference>
<dbReference type="GeneTree" id="ENSGT00940000155378"/>
<dbReference type="HOGENOM" id="CLU_032316_0_0_1"/>
<dbReference type="InParanoid" id="Q6AXP4"/>
<dbReference type="OrthoDB" id="193650at2759"/>
<dbReference type="PhylomeDB" id="Q6AXP4"/>
<dbReference type="TreeFam" id="TF336850"/>
<dbReference type="PRO" id="PR:Q6AXP4"/>
<dbReference type="Proteomes" id="UP000002494">
    <property type="component" value="Chromosome 4"/>
</dbReference>
<dbReference type="Bgee" id="ENSRNOG00000009917">
    <property type="expression patterns" value="Expressed in testis and 13 other cell types or tissues"/>
</dbReference>
<dbReference type="InterPro" id="IPR028042">
    <property type="entry name" value="DUF4639"/>
</dbReference>
<dbReference type="PANTHER" id="PTHR34438:SF1">
    <property type="entry name" value="CHROMOSOME 2 OPEN READING FRAME 81"/>
    <property type="match status" value="1"/>
</dbReference>
<dbReference type="PANTHER" id="PTHR34438">
    <property type="entry name" value="SI:DKEY-97L20.6"/>
    <property type="match status" value="1"/>
</dbReference>
<dbReference type="Pfam" id="PF15479">
    <property type="entry name" value="DUF4639"/>
    <property type="match status" value="1"/>
</dbReference>
<keyword id="KW-0597">Phosphoprotein</keyword>
<keyword id="KW-1185">Reference proteome</keyword>
<name>CB081_RAT</name>
<proteinExistence type="evidence at protein level"/>
<accession>Q6AXP4</accession>
<feature type="chain" id="PRO_0000328768" description="Uncharacterized protein C2orf81 homolog">
    <location>
        <begin position="1"/>
        <end position="597"/>
    </location>
</feature>
<feature type="region of interest" description="Disordered" evidence="1">
    <location>
        <begin position="1"/>
        <end position="32"/>
    </location>
</feature>
<feature type="region of interest" description="Disordered" evidence="1">
    <location>
        <begin position="171"/>
        <end position="192"/>
    </location>
</feature>
<feature type="region of interest" description="Disordered" evidence="1">
    <location>
        <begin position="302"/>
        <end position="335"/>
    </location>
</feature>
<feature type="region of interest" description="Disordered" evidence="1">
    <location>
        <begin position="549"/>
        <end position="569"/>
    </location>
</feature>
<feature type="compositionally biased region" description="Basic and acidic residues" evidence="1">
    <location>
        <begin position="1"/>
        <end position="23"/>
    </location>
</feature>
<feature type="compositionally biased region" description="Low complexity" evidence="1">
    <location>
        <begin position="175"/>
        <end position="186"/>
    </location>
</feature>
<feature type="compositionally biased region" description="Polar residues" evidence="1">
    <location>
        <begin position="557"/>
        <end position="568"/>
    </location>
</feature>
<feature type="modified residue" description="Phosphoserine" evidence="2">
    <location>
        <position position="237"/>
    </location>
</feature>
<feature type="modified residue" description="Phosphoserine" evidence="2">
    <location>
        <position position="241"/>
    </location>
</feature>